<gene>
    <name evidence="1" type="primary">rpsH</name>
    <name type="ordered locus">PAM_214</name>
</gene>
<reference key="1">
    <citation type="journal article" date="2004" name="Nat. Genet.">
        <title>Reductive evolution suggested from the complete genome sequence of a plant-pathogenic phytoplasma.</title>
        <authorList>
            <person name="Oshima K."/>
            <person name="Kakizawa S."/>
            <person name="Nishigawa H."/>
            <person name="Jung H.-Y."/>
            <person name="Wei W."/>
            <person name="Suzuki S."/>
            <person name="Arashida R."/>
            <person name="Nakata D."/>
            <person name="Miyata S."/>
            <person name="Ugaki M."/>
            <person name="Namba S."/>
        </authorList>
    </citation>
    <scope>NUCLEOTIDE SEQUENCE [LARGE SCALE GENOMIC DNA]</scope>
    <source>
        <strain>OY-M</strain>
    </source>
</reference>
<dbReference type="EMBL" id="AP006628">
    <property type="protein sequence ID" value="BAD04299.1"/>
    <property type="molecule type" value="Genomic_DNA"/>
</dbReference>
<dbReference type="SMR" id="Q6YR08"/>
<dbReference type="STRING" id="262768.PAM_214"/>
<dbReference type="KEGG" id="poy:PAM_214"/>
<dbReference type="eggNOG" id="COG0096">
    <property type="taxonomic scope" value="Bacteria"/>
</dbReference>
<dbReference type="HOGENOM" id="CLU_098428_0_2_14"/>
<dbReference type="BioCyc" id="OYEL262768:G1G26-260-MONOMER"/>
<dbReference type="Proteomes" id="UP000002523">
    <property type="component" value="Chromosome"/>
</dbReference>
<dbReference type="GO" id="GO:1990904">
    <property type="term" value="C:ribonucleoprotein complex"/>
    <property type="evidence" value="ECO:0007669"/>
    <property type="project" value="UniProtKB-KW"/>
</dbReference>
<dbReference type="GO" id="GO:0005840">
    <property type="term" value="C:ribosome"/>
    <property type="evidence" value="ECO:0007669"/>
    <property type="project" value="UniProtKB-KW"/>
</dbReference>
<dbReference type="GO" id="GO:0019843">
    <property type="term" value="F:rRNA binding"/>
    <property type="evidence" value="ECO:0007669"/>
    <property type="project" value="UniProtKB-UniRule"/>
</dbReference>
<dbReference type="GO" id="GO:0003735">
    <property type="term" value="F:structural constituent of ribosome"/>
    <property type="evidence" value="ECO:0007669"/>
    <property type="project" value="InterPro"/>
</dbReference>
<dbReference type="GO" id="GO:0006412">
    <property type="term" value="P:translation"/>
    <property type="evidence" value="ECO:0007669"/>
    <property type="project" value="UniProtKB-UniRule"/>
</dbReference>
<dbReference type="FunFam" id="3.30.1370.30:FF:000002">
    <property type="entry name" value="30S ribosomal protein S8"/>
    <property type="match status" value="1"/>
</dbReference>
<dbReference type="FunFam" id="3.30.1490.10:FF:000001">
    <property type="entry name" value="30S ribosomal protein S8"/>
    <property type="match status" value="1"/>
</dbReference>
<dbReference type="Gene3D" id="3.30.1370.30">
    <property type="match status" value="1"/>
</dbReference>
<dbReference type="Gene3D" id="3.30.1490.10">
    <property type="match status" value="1"/>
</dbReference>
<dbReference type="HAMAP" id="MF_01302_B">
    <property type="entry name" value="Ribosomal_uS8_B"/>
    <property type="match status" value="1"/>
</dbReference>
<dbReference type="InterPro" id="IPR000630">
    <property type="entry name" value="Ribosomal_uS8"/>
</dbReference>
<dbReference type="InterPro" id="IPR047863">
    <property type="entry name" value="Ribosomal_uS8_CS"/>
</dbReference>
<dbReference type="InterPro" id="IPR035987">
    <property type="entry name" value="Ribosomal_uS8_sf"/>
</dbReference>
<dbReference type="NCBIfam" id="NF001109">
    <property type="entry name" value="PRK00136.1"/>
    <property type="match status" value="1"/>
</dbReference>
<dbReference type="PANTHER" id="PTHR11758">
    <property type="entry name" value="40S RIBOSOMAL PROTEIN S15A"/>
    <property type="match status" value="1"/>
</dbReference>
<dbReference type="Pfam" id="PF00410">
    <property type="entry name" value="Ribosomal_S8"/>
    <property type="match status" value="1"/>
</dbReference>
<dbReference type="SUPFAM" id="SSF56047">
    <property type="entry name" value="Ribosomal protein S8"/>
    <property type="match status" value="1"/>
</dbReference>
<dbReference type="PROSITE" id="PS00053">
    <property type="entry name" value="RIBOSOMAL_S8"/>
    <property type="match status" value="1"/>
</dbReference>
<feature type="chain" id="PRO_0000126456" description="Small ribosomal subunit protein uS8">
    <location>
        <begin position="1"/>
        <end position="130"/>
    </location>
</feature>
<accession>Q6YR08</accession>
<sequence>MVMTDPIADMLTRIRNANQMSHLKVLVPASKLKLEILAVLKKEGFIKDFYLPQSSREIIISLKYAPNKERVIKGLKRVSKPGLRVYASAEQIPKVLNGLGVALVSTSKGILTDAQARLSQVGGEVLAYIW</sequence>
<proteinExistence type="inferred from homology"/>
<protein>
    <recommendedName>
        <fullName evidence="1">Small ribosomal subunit protein uS8</fullName>
    </recommendedName>
    <alternativeName>
        <fullName evidence="2">30S ribosomal protein S8</fullName>
    </alternativeName>
</protein>
<evidence type="ECO:0000255" key="1">
    <source>
        <dbReference type="HAMAP-Rule" id="MF_01302"/>
    </source>
</evidence>
<evidence type="ECO:0000305" key="2"/>
<keyword id="KW-0687">Ribonucleoprotein</keyword>
<keyword id="KW-0689">Ribosomal protein</keyword>
<keyword id="KW-0694">RNA-binding</keyword>
<keyword id="KW-0699">rRNA-binding</keyword>
<organism>
    <name type="scientific">Onion yellows phytoplasma (strain OY-M)</name>
    <dbReference type="NCBI Taxonomy" id="262768"/>
    <lineage>
        <taxon>Bacteria</taxon>
        <taxon>Bacillati</taxon>
        <taxon>Mycoplasmatota</taxon>
        <taxon>Mollicutes</taxon>
        <taxon>Acholeplasmatales</taxon>
        <taxon>Acholeplasmataceae</taxon>
        <taxon>Candidatus Phytoplasma</taxon>
        <taxon>16SrI (Aster yellows group)</taxon>
    </lineage>
</organism>
<name>RS8_ONYPE</name>
<comment type="function">
    <text evidence="1">One of the primary rRNA binding proteins, it binds directly to 16S rRNA central domain where it helps coordinate assembly of the platform of the 30S subunit.</text>
</comment>
<comment type="subunit">
    <text evidence="1">Part of the 30S ribosomal subunit. Contacts proteins S5 and S12.</text>
</comment>
<comment type="similarity">
    <text evidence="1">Belongs to the universal ribosomal protein uS8 family.</text>
</comment>